<evidence type="ECO:0000255" key="1">
    <source>
        <dbReference type="HAMAP-Rule" id="MF_01868"/>
    </source>
</evidence>
<comment type="function">
    <text evidence="1">Catalyzes the dephosphorylation of heptose(II) of the outer membrane lipopolysaccharide core.</text>
</comment>
<comment type="pathway">
    <text evidence="1">Bacterial outer membrane biogenesis; lipopolysaccharide metabolism.</text>
</comment>
<comment type="subcellular location">
    <subcellularLocation>
        <location evidence="1">Periplasm</location>
    </subcellularLocation>
</comment>
<comment type="similarity">
    <text evidence="1">Belongs to the phosphoglycerate mutase family. Ais subfamily.</text>
</comment>
<feature type="signal peptide" evidence="1">
    <location>
        <begin position="1"/>
        <end position="25"/>
    </location>
</feature>
<feature type="chain" id="PRO_0000380555" description="Lipopolysaccharide core heptose(II)-phosphate phosphatase">
    <location>
        <begin position="26"/>
        <end position="200"/>
    </location>
</feature>
<name>AIS_ECOLC</name>
<accession>B1IXT5</accession>
<proteinExistence type="inferred from homology"/>
<reference key="1">
    <citation type="submission" date="2008-02" db="EMBL/GenBank/DDBJ databases">
        <title>Complete sequence of Escherichia coli C str. ATCC 8739.</title>
        <authorList>
            <person name="Copeland A."/>
            <person name="Lucas S."/>
            <person name="Lapidus A."/>
            <person name="Glavina del Rio T."/>
            <person name="Dalin E."/>
            <person name="Tice H."/>
            <person name="Bruce D."/>
            <person name="Goodwin L."/>
            <person name="Pitluck S."/>
            <person name="Kiss H."/>
            <person name="Brettin T."/>
            <person name="Detter J.C."/>
            <person name="Han C."/>
            <person name="Kuske C.R."/>
            <person name="Schmutz J."/>
            <person name="Larimer F."/>
            <person name="Land M."/>
            <person name="Hauser L."/>
            <person name="Kyrpides N."/>
            <person name="Mikhailova N."/>
            <person name="Ingram L."/>
            <person name="Richardson P."/>
        </authorList>
    </citation>
    <scope>NUCLEOTIDE SEQUENCE [LARGE SCALE GENOMIC DNA]</scope>
    <source>
        <strain>ATCC 8739 / DSM 1576 / NBRC 3972 / NCIMB 8545 / WDCM 00012 / Crooks</strain>
    </source>
</reference>
<keyword id="KW-0378">Hydrolase</keyword>
<keyword id="KW-0574">Periplasm</keyword>
<keyword id="KW-0732">Signal</keyword>
<gene>
    <name evidence="1" type="primary">ais</name>
    <name type="ordered locus">EcolC_1397</name>
</gene>
<organism>
    <name type="scientific">Escherichia coli (strain ATCC 8739 / DSM 1576 / NBRC 3972 / NCIMB 8545 / WDCM 00012 / Crooks)</name>
    <dbReference type="NCBI Taxonomy" id="481805"/>
    <lineage>
        <taxon>Bacteria</taxon>
        <taxon>Pseudomonadati</taxon>
        <taxon>Pseudomonadota</taxon>
        <taxon>Gammaproteobacteria</taxon>
        <taxon>Enterobacterales</taxon>
        <taxon>Enterobacteriaceae</taxon>
        <taxon>Escherichia</taxon>
    </lineage>
</organism>
<protein>
    <recommendedName>
        <fullName evidence="1">Lipopolysaccharide core heptose(II)-phosphate phosphatase</fullName>
        <ecNumber evidence="1">3.1.3.-</ecNumber>
    </recommendedName>
</protein>
<sequence>MLAFCRSSLKSKKYIIILLALAAIAGLGTHAAWSSNGLPRIDNKTLARLAQQHPVVVLFRHAERCDRSTNQCLSDKTGITVKGTQDARELGNAFSADIPDFDLYSSNTVRTIQSATWFSAGKKLTVDKRLLQCGNEIYSAIKDLQSKAPDKNIVIFTHNHCLTYIAKDKRDATFKPDYLDGLVMHVEKGKVYLDGEFVNH</sequence>
<dbReference type="EC" id="3.1.3.-" evidence="1"/>
<dbReference type="EMBL" id="CP000946">
    <property type="protein sequence ID" value="ACA77061.1"/>
    <property type="molecule type" value="Genomic_DNA"/>
</dbReference>
<dbReference type="RefSeq" id="WP_000879112.1">
    <property type="nucleotide sequence ID" value="NZ_MTFT01000028.1"/>
</dbReference>
<dbReference type="SMR" id="B1IXT5"/>
<dbReference type="KEGG" id="ecl:EcolC_1397"/>
<dbReference type="HOGENOM" id="CLU_106705_1_0_6"/>
<dbReference type="UniPathway" id="UPA00451"/>
<dbReference type="GO" id="GO:0042597">
    <property type="term" value="C:periplasmic space"/>
    <property type="evidence" value="ECO:0007669"/>
    <property type="project" value="UniProtKB-SubCell"/>
</dbReference>
<dbReference type="GO" id="GO:0016791">
    <property type="term" value="F:phosphatase activity"/>
    <property type="evidence" value="ECO:0007669"/>
    <property type="project" value="UniProtKB-UniRule"/>
</dbReference>
<dbReference type="GO" id="GO:0008653">
    <property type="term" value="P:lipopolysaccharide metabolic process"/>
    <property type="evidence" value="ECO:0007669"/>
    <property type="project" value="UniProtKB-UniRule"/>
</dbReference>
<dbReference type="CDD" id="cd07040">
    <property type="entry name" value="HP"/>
    <property type="match status" value="1"/>
</dbReference>
<dbReference type="Gene3D" id="3.40.50.1240">
    <property type="entry name" value="Phosphoglycerate mutase-like"/>
    <property type="match status" value="1"/>
</dbReference>
<dbReference type="HAMAP" id="MF_01868">
    <property type="entry name" value="Ais"/>
    <property type="match status" value="1"/>
</dbReference>
<dbReference type="InterPro" id="IPR013078">
    <property type="entry name" value="His_Pase_superF_clade-1"/>
</dbReference>
<dbReference type="InterPro" id="IPR029033">
    <property type="entry name" value="His_PPase_superfam"/>
</dbReference>
<dbReference type="InterPro" id="IPR011310">
    <property type="entry name" value="LipoPS_heptP_Pase"/>
</dbReference>
<dbReference type="NCBIfam" id="NF011945">
    <property type="entry name" value="PRK15416.1"/>
    <property type="match status" value="1"/>
</dbReference>
<dbReference type="Pfam" id="PF00300">
    <property type="entry name" value="His_Phos_1"/>
    <property type="match status" value="1"/>
</dbReference>
<dbReference type="PIRSF" id="PIRSF011416">
    <property type="entry name" value="Ais-TraG-AfrS"/>
    <property type="match status" value="1"/>
</dbReference>
<dbReference type="SUPFAM" id="SSF53254">
    <property type="entry name" value="Phosphoglycerate mutase-like"/>
    <property type="match status" value="1"/>
</dbReference>